<reference key="1">
    <citation type="journal article" date="1999" name="DNA Res.">
        <title>Complete genome sequence of an aerobic hyper-thermophilic crenarchaeon, Aeropyrum pernix K1.</title>
        <authorList>
            <person name="Kawarabayasi Y."/>
            <person name="Hino Y."/>
            <person name="Horikawa H."/>
            <person name="Yamazaki S."/>
            <person name="Haikawa Y."/>
            <person name="Jin-no K."/>
            <person name="Takahashi M."/>
            <person name="Sekine M."/>
            <person name="Baba S."/>
            <person name="Ankai A."/>
            <person name="Kosugi H."/>
            <person name="Hosoyama A."/>
            <person name="Fukui S."/>
            <person name="Nagai Y."/>
            <person name="Nishijima K."/>
            <person name="Nakazawa H."/>
            <person name="Takamiya M."/>
            <person name="Masuda S."/>
            <person name="Funahashi T."/>
            <person name="Tanaka T."/>
            <person name="Kudoh Y."/>
            <person name="Yamazaki J."/>
            <person name="Kushida N."/>
            <person name="Oguchi A."/>
            <person name="Aoki K."/>
            <person name="Kubota K."/>
            <person name="Nakamura Y."/>
            <person name="Nomura N."/>
            <person name="Sako Y."/>
            <person name="Kikuchi H."/>
        </authorList>
    </citation>
    <scope>NUCLEOTIDE SEQUENCE [LARGE SCALE GENOMIC DNA]</scope>
    <source>
        <strain>ATCC 700893 / DSM 11879 / JCM 9820 / NBRC 100138 / K1</strain>
    </source>
</reference>
<feature type="chain" id="PRO_0000150088" description="DNA repair and recombination protein RadA">
    <location>
        <begin position="1"/>
        <end position="319"/>
    </location>
</feature>
<feature type="binding site" evidence="2">
    <location>
        <begin position="111"/>
        <end position="118"/>
    </location>
    <ligand>
        <name>ATP</name>
        <dbReference type="ChEBI" id="CHEBI:30616"/>
    </ligand>
</feature>
<evidence type="ECO:0000250" key="1"/>
<evidence type="ECO:0000255" key="2"/>
<evidence type="ECO:0000305" key="3"/>
<sequence length="319" mass="35320">MGEDKREIKDITDLPGVGPTTAQKLMEAGYTTLEAIAAATPQEVSQATGIPILTAQKIVDAAREALNIDFKTAYDLKIESMNIKKITTGSRNLDELLGGGIETKTITELFGEFGSGKTQICHQLSVNVQLPEDKGGLEGKAVYVDTEGTFRWERIEQMARGVGLDPDEVMKNIYWIRAINSHHQIAIVDKLFTMVKNDNIKLVVVDSVTSHFRAEFPGRENLAMRQQLLNRHLHQLMRLADIFNVAVVITNQVMARPDVFYGDPTQAVGGHVLGHAPGVRVYLKKSRGNKRIARVVDAPHLPEGETVFAITEWGIRDPE</sequence>
<organism>
    <name type="scientific">Aeropyrum pernix (strain ATCC 700893 / DSM 11879 / JCM 9820 / NBRC 100138 / K1)</name>
    <dbReference type="NCBI Taxonomy" id="272557"/>
    <lineage>
        <taxon>Archaea</taxon>
        <taxon>Thermoproteota</taxon>
        <taxon>Thermoprotei</taxon>
        <taxon>Desulfurococcales</taxon>
        <taxon>Desulfurococcaceae</taxon>
        <taxon>Aeropyrum</taxon>
    </lineage>
</organism>
<protein>
    <recommendedName>
        <fullName>DNA repair and recombination protein RadA</fullName>
    </recommendedName>
</protein>
<dbReference type="EMBL" id="BA000002">
    <property type="protein sequence ID" value="BAA79030.1"/>
    <property type="molecule type" value="Genomic_DNA"/>
</dbReference>
<dbReference type="PIR" id="D72766">
    <property type="entry name" value="D72766"/>
</dbReference>
<dbReference type="RefSeq" id="WP_010865503.1">
    <property type="nucleotide sequence ID" value="NC_000854.2"/>
</dbReference>
<dbReference type="SMR" id="P0CW92"/>
<dbReference type="STRING" id="272557.APE_0119"/>
<dbReference type="EnsemblBacteria" id="BAA79030">
    <property type="protein sequence ID" value="BAA79030"/>
    <property type="gene ID" value="APE_0119"/>
</dbReference>
<dbReference type="GeneID" id="1445660"/>
<dbReference type="KEGG" id="ape:APE_0119"/>
<dbReference type="PATRIC" id="fig|272557.25.peg.81"/>
<dbReference type="eggNOG" id="arCOG00415">
    <property type="taxonomic scope" value="Archaea"/>
</dbReference>
<dbReference type="Proteomes" id="UP000002518">
    <property type="component" value="Chromosome"/>
</dbReference>
<dbReference type="GO" id="GO:0005524">
    <property type="term" value="F:ATP binding"/>
    <property type="evidence" value="ECO:0007669"/>
    <property type="project" value="UniProtKB-UniRule"/>
</dbReference>
<dbReference type="GO" id="GO:0016887">
    <property type="term" value="F:ATP hydrolysis activity"/>
    <property type="evidence" value="ECO:0007669"/>
    <property type="project" value="InterPro"/>
</dbReference>
<dbReference type="GO" id="GO:0140664">
    <property type="term" value="F:ATP-dependent DNA damage sensor activity"/>
    <property type="evidence" value="ECO:0007669"/>
    <property type="project" value="InterPro"/>
</dbReference>
<dbReference type="GO" id="GO:0003684">
    <property type="term" value="F:damaged DNA binding"/>
    <property type="evidence" value="ECO:0007669"/>
    <property type="project" value="UniProtKB-UniRule"/>
</dbReference>
<dbReference type="GO" id="GO:0006310">
    <property type="term" value="P:DNA recombination"/>
    <property type="evidence" value="ECO:0007669"/>
    <property type="project" value="UniProtKB-UniRule"/>
</dbReference>
<dbReference type="GO" id="GO:0006281">
    <property type="term" value="P:DNA repair"/>
    <property type="evidence" value="ECO:0007669"/>
    <property type="project" value="UniProtKB-UniRule"/>
</dbReference>
<dbReference type="CDD" id="cd19515">
    <property type="entry name" value="archRadA"/>
    <property type="match status" value="1"/>
</dbReference>
<dbReference type="FunFam" id="3.40.50.300:FF:002052">
    <property type="entry name" value="DNA repair protein RAD51 homolog"/>
    <property type="match status" value="1"/>
</dbReference>
<dbReference type="Gene3D" id="1.10.150.20">
    <property type="entry name" value="5' to 3' exonuclease, C-terminal subdomain"/>
    <property type="match status" value="1"/>
</dbReference>
<dbReference type="Gene3D" id="3.40.50.300">
    <property type="entry name" value="P-loop containing nucleotide triphosphate hydrolases"/>
    <property type="match status" value="1"/>
</dbReference>
<dbReference type="HAMAP" id="MF_00348">
    <property type="entry name" value="RadA_arch"/>
    <property type="match status" value="1"/>
</dbReference>
<dbReference type="InterPro" id="IPR003593">
    <property type="entry name" value="AAA+_ATPase"/>
</dbReference>
<dbReference type="InterPro" id="IPR013632">
    <property type="entry name" value="DNA_recomb/repair_Rad51_C"/>
</dbReference>
<dbReference type="InterPro" id="IPR011938">
    <property type="entry name" value="DNA_recomb/repair_RadA"/>
</dbReference>
<dbReference type="InterPro" id="IPR016467">
    <property type="entry name" value="DNA_recomb/repair_RecA-like"/>
</dbReference>
<dbReference type="InterPro" id="IPR010995">
    <property type="entry name" value="DNA_repair_Rad51/TF_NusA_a-hlx"/>
</dbReference>
<dbReference type="InterPro" id="IPR027417">
    <property type="entry name" value="P-loop_NTPase"/>
</dbReference>
<dbReference type="InterPro" id="IPR020588">
    <property type="entry name" value="RecA_ATP-bd"/>
</dbReference>
<dbReference type="InterPro" id="IPR020587">
    <property type="entry name" value="RecA_monomer-monomer_interface"/>
</dbReference>
<dbReference type="NCBIfam" id="NF003301">
    <property type="entry name" value="PRK04301.1"/>
    <property type="match status" value="1"/>
</dbReference>
<dbReference type="NCBIfam" id="TIGR02236">
    <property type="entry name" value="recomb_radA"/>
    <property type="match status" value="1"/>
</dbReference>
<dbReference type="PANTHER" id="PTHR22942:SF30">
    <property type="entry name" value="MEIOTIC RECOMBINATION PROTEIN DMC1_LIM15 HOMOLOG"/>
    <property type="match status" value="1"/>
</dbReference>
<dbReference type="PANTHER" id="PTHR22942">
    <property type="entry name" value="RECA/RAD51/RADA DNA STRAND-PAIRING FAMILY MEMBER"/>
    <property type="match status" value="1"/>
</dbReference>
<dbReference type="Pfam" id="PF14520">
    <property type="entry name" value="HHH_5"/>
    <property type="match status" value="1"/>
</dbReference>
<dbReference type="Pfam" id="PF08423">
    <property type="entry name" value="Rad51"/>
    <property type="match status" value="1"/>
</dbReference>
<dbReference type="PIRSF" id="PIRSF005856">
    <property type="entry name" value="Rad51"/>
    <property type="match status" value="1"/>
</dbReference>
<dbReference type="SMART" id="SM00382">
    <property type="entry name" value="AAA"/>
    <property type="match status" value="1"/>
</dbReference>
<dbReference type="SUPFAM" id="SSF52540">
    <property type="entry name" value="P-loop containing nucleoside triphosphate hydrolases"/>
    <property type="match status" value="1"/>
</dbReference>
<dbReference type="SUPFAM" id="SSF47794">
    <property type="entry name" value="Rad51 N-terminal domain-like"/>
    <property type="match status" value="1"/>
</dbReference>
<dbReference type="PROSITE" id="PS50162">
    <property type="entry name" value="RECA_2"/>
    <property type="match status" value="1"/>
</dbReference>
<dbReference type="PROSITE" id="PS50163">
    <property type="entry name" value="RECA_3"/>
    <property type="match status" value="1"/>
</dbReference>
<name>RADA_AERPE</name>
<comment type="function">
    <text evidence="1">Involved in DNA repair and in homologous recombination. Binds and assemble on single-stranded DNA to form a nucleoprotein filament. Hydrolyzes ATP in a ssDNA-dependent manner and promotes DNA strand exchange between homologous DNA molecules (By similarity).</text>
</comment>
<comment type="similarity">
    <text evidence="3">Belongs to the eukaryotic RecA-like protein family.</text>
</comment>
<gene>
    <name type="primary">radA</name>
    <name type="ordered locus">APE_0119</name>
</gene>
<keyword id="KW-0067">ATP-binding</keyword>
<keyword id="KW-0227">DNA damage</keyword>
<keyword id="KW-0233">DNA recombination</keyword>
<keyword id="KW-0238">DNA-binding</keyword>
<keyword id="KW-0547">Nucleotide-binding</keyword>
<keyword id="KW-1185">Reference proteome</keyword>
<accession>P0CW92</accession>
<accession>Q8X233</accession>
<accession>Q8X263</accession>
<accession>Q8X264</accession>
<accession>Q8X265</accession>
<accession>Q8X266</accession>
<accession>Q8X267</accession>
<accession>Q9YFY1</accession>
<proteinExistence type="inferred from homology"/>